<organism>
    <name type="scientific">Streptomyces avermitilis (strain ATCC 31267 / DSM 46492 / JCM 5070 / NBRC 14893 / NCIMB 12804 / NRRL 8165 / MA-4680)</name>
    <dbReference type="NCBI Taxonomy" id="227882"/>
    <lineage>
        <taxon>Bacteria</taxon>
        <taxon>Bacillati</taxon>
        <taxon>Actinomycetota</taxon>
        <taxon>Actinomycetes</taxon>
        <taxon>Kitasatosporales</taxon>
        <taxon>Streptomycetaceae</taxon>
        <taxon>Streptomyces</taxon>
    </lineage>
</organism>
<evidence type="ECO:0000255" key="1">
    <source>
        <dbReference type="HAMAP-Rule" id="MF_00124"/>
    </source>
</evidence>
<accession>Q82KI9</accession>
<dbReference type="EC" id="2.7.1.21" evidence="1"/>
<dbReference type="EMBL" id="BA000030">
    <property type="protein sequence ID" value="BAC70125.1"/>
    <property type="molecule type" value="Genomic_DNA"/>
</dbReference>
<dbReference type="RefSeq" id="WP_010983851.1">
    <property type="nucleotide sequence ID" value="NZ_JZJK01000086.1"/>
</dbReference>
<dbReference type="SMR" id="Q82KI9"/>
<dbReference type="GeneID" id="41539502"/>
<dbReference type="KEGG" id="sma:SAVERM_2414"/>
<dbReference type="eggNOG" id="COG1435">
    <property type="taxonomic scope" value="Bacteria"/>
</dbReference>
<dbReference type="HOGENOM" id="CLU_064400_2_0_11"/>
<dbReference type="OrthoDB" id="9781579at2"/>
<dbReference type="Proteomes" id="UP000000428">
    <property type="component" value="Chromosome"/>
</dbReference>
<dbReference type="GO" id="GO:0005829">
    <property type="term" value="C:cytosol"/>
    <property type="evidence" value="ECO:0007669"/>
    <property type="project" value="TreeGrafter"/>
</dbReference>
<dbReference type="GO" id="GO:0005524">
    <property type="term" value="F:ATP binding"/>
    <property type="evidence" value="ECO:0007669"/>
    <property type="project" value="UniProtKB-UniRule"/>
</dbReference>
<dbReference type="GO" id="GO:0004797">
    <property type="term" value="F:thymidine kinase activity"/>
    <property type="evidence" value="ECO:0007669"/>
    <property type="project" value="UniProtKB-UniRule"/>
</dbReference>
<dbReference type="GO" id="GO:0071897">
    <property type="term" value="P:DNA biosynthetic process"/>
    <property type="evidence" value="ECO:0007669"/>
    <property type="project" value="UniProtKB-KW"/>
</dbReference>
<dbReference type="GO" id="GO:0046104">
    <property type="term" value="P:thymidine metabolic process"/>
    <property type="evidence" value="ECO:0007669"/>
    <property type="project" value="TreeGrafter"/>
</dbReference>
<dbReference type="Gene3D" id="3.30.60.20">
    <property type="match status" value="1"/>
</dbReference>
<dbReference type="Gene3D" id="3.40.50.300">
    <property type="entry name" value="P-loop containing nucleotide triphosphate hydrolases"/>
    <property type="match status" value="1"/>
</dbReference>
<dbReference type="HAMAP" id="MF_00124">
    <property type="entry name" value="Thymidine_kinase"/>
    <property type="match status" value="1"/>
</dbReference>
<dbReference type="InterPro" id="IPR027417">
    <property type="entry name" value="P-loop_NTPase"/>
</dbReference>
<dbReference type="InterPro" id="IPR001267">
    <property type="entry name" value="Thymidine_kinase"/>
</dbReference>
<dbReference type="NCBIfam" id="NF003297">
    <property type="entry name" value="PRK04296.1-2"/>
    <property type="match status" value="1"/>
</dbReference>
<dbReference type="PANTHER" id="PTHR11441">
    <property type="entry name" value="THYMIDINE KINASE"/>
    <property type="match status" value="1"/>
</dbReference>
<dbReference type="PANTHER" id="PTHR11441:SF0">
    <property type="entry name" value="THYMIDINE KINASE, CYTOSOLIC"/>
    <property type="match status" value="1"/>
</dbReference>
<dbReference type="Pfam" id="PF00265">
    <property type="entry name" value="TK"/>
    <property type="match status" value="1"/>
</dbReference>
<dbReference type="PIRSF" id="PIRSF035805">
    <property type="entry name" value="TK_cell"/>
    <property type="match status" value="1"/>
</dbReference>
<dbReference type="SUPFAM" id="SSF57716">
    <property type="entry name" value="Glucocorticoid receptor-like (DNA-binding domain)"/>
    <property type="match status" value="1"/>
</dbReference>
<dbReference type="SUPFAM" id="SSF52540">
    <property type="entry name" value="P-loop containing nucleoside triphosphate hydrolases"/>
    <property type="match status" value="1"/>
</dbReference>
<reference key="1">
    <citation type="journal article" date="2001" name="Proc. Natl. Acad. Sci. U.S.A.">
        <title>Genome sequence of an industrial microorganism Streptomyces avermitilis: deducing the ability of producing secondary metabolites.</title>
        <authorList>
            <person name="Omura S."/>
            <person name="Ikeda H."/>
            <person name="Ishikawa J."/>
            <person name="Hanamoto A."/>
            <person name="Takahashi C."/>
            <person name="Shinose M."/>
            <person name="Takahashi Y."/>
            <person name="Horikawa H."/>
            <person name="Nakazawa H."/>
            <person name="Osonoe T."/>
            <person name="Kikuchi H."/>
            <person name="Shiba T."/>
            <person name="Sakaki Y."/>
            <person name="Hattori M."/>
        </authorList>
    </citation>
    <scope>NUCLEOTIDE SEQUENCE [LARGE SCALE GENOMIC DNA]</scope>
    <source>
        <strain>ATCC 31267 / DSM 46492 / JCM 5070 / NBRC 14893 / NCIMB 12804 / NRRL 8165 / MA-4680</strain>
    </source>
</reference>
<reference key="2">
    <citation type="journal article" date="2003" name="Nat. Biotechnol.">
        <title>Complete genome sequence and comparative analysis of the industrial microorganism Streptomyces avermitilis.</title>
        <authorList>
            <person name="Ikeda H."/>
            <person name="Ishikawa J."/>
            <person name="Hanamoto A."/>
            <person name="Shinose M."/>
            <person name="Kikuchi H."/>
            <person name="Shiba T."/>
            <person name="Sakaki Y."/>
            <person name="Hattori M."/>
            <person name="Omura S."/>
        </authorList>
    </citation>
    <scope>NUCLEOTIDE SEQUENCE [LARGE SCALE GENOMIC DNA]</scope>
    <source>
        <strain>ATCC 31267 / DSM 46492 / JCM 5070 / NBRC 14893 / NCIMB 12804 / NRRL 8165 / MA-4680</strain>
    </source>
</reference>
<name>KITH_STRAW</name>
<sequence length="216" mass="23482">MPELVFFSGTMDCGKSTLALQIGHNRSARGLQGVIFTRDDRAGEGKLSSRLGLVTEAVEAAPGMDLHAYLVDQMSKGGKVDYLIVDEAQFLAPEQIDQLARVVDDLDLDVFAFGITTDFRTKLFPGSQRLIELADRIETLQVEAMCWCGARATHNARTVGGEMVVEGEQVVVGDVNRPAAEVGYEVLCRRHHRRRMTSASAYAAAISPDVLPVTSA</sequence>
<protein>
    <recommendedName>
        <fullName evidence="1">Thymidine kinase</fullName>
        <ecNumber evidence="1">2.7.1.21</ecNumber>
    </recommendedName>
</protein>
<comment type="catalytic activity">
    <reaction evidence="1">
        <text>thymidine + ATP = dTMP + ADP + H(+)</text>
        <dbReference type="Rhea" id="RHEA:19129"/>
        <dbReference type="ChEBI" id="CHEBI:15378"/>
        <dbReference type="ChEBI" id="CHEBI:17748"/>
        <dbReference type="ChEBI" id="CHEBI:30616"/>
        <dbReference type="ChEBI" id="CHEBI:63528"/>
        <dbReference type="ChEBI" id="CHEBI:456216"/>
        <dbReference type="EC" id="2.7.1.21"/>
    </reaction>
</comment>
<comment type="subunit">
    <text evidence="1">Homotetramer.</text>
</comment>
<comment type="subcellular location">
    <subcellularLocation>
        <location evidence="1">Cytoplasm</location>
    </subcellularLocation>
</comment>
<comment type="similarity">
    <text evidence="1">Belongs to the thymidine kinase family.</text>
</comment>
<feature type="chain" id="PRO_0000175028" description="Thymidine kinase">
    <location>
        <begin position="1"/>
        <end position="216"/>
    </location>
</feature>
<feature type="active site" description="Proton acceptor" evidence="1">
    <location>
        <position position="87"/>
    </location>
</feature>
<feature type="binding site" evidence="1">
    <location>
        <begin position="9"/>
        <end position="16"/>
    </location>
    <ligand>
        <name>ATP</name>
        <dbReference type="ChEBI" id="CHEBI:30616"/>
    </ligand>
</feature>
<feature type="binding site" evidence="1">
    <location>
        <begin position="86"/>
        <end position="89"/>
    </location>
    <ligand>
        <name>ATP</name>
        <dbReference type="ChEBI" id="CHEBI:30616"/>
    </ligand>
</feature>
<gene>
    <name evidence="1" type="primary">tdk</name>
    <name type="ordered locus">SAV_2414</name>
</gene>
<keyword id="KW-0067">ATP-binding</keyword>
<keyword id="KW-0963">Cytoplasm</keyword>
<keyword id="KW-0237">DNA synthesis</keyword>
<keyword id="KW-0418">Kinase</keyword>
<keyword id="KW-0547">Nucleotide-binding</keyword>
<keyword id="KW-1185">Reference proteome</keyword>
<keyword id="KW-0808">Transferase</keyword>
<proteinExistence type="inferred from homology"/>